<protein>
    <recommendedName>
        <fullName evidence="1">Probable transaldolase</fullName>
        <ecNumber evidence="1">2.2.1.2</ecNumber>
    </recommendedName>
</protein>
<gene>
    <name evidence="1" type="primary">tal</name>
    <name type="ordered locus">lp_3539</name>
</gene>
<comment type="function">
    <text evidence="1">Transaldolase is important for the balance of metabolites in the pentose-phosphate pathway.</text>
</comment>
<comment type="catalytic activity">
    <reaction evidence="1">
        <text>D-sedoheptulose 7-phosphate + D-glyceraldehyde 3-phosphate = D-erythrose 4-phosphate + beta-D-fructose 6-phosphate</text>
        <dbReference type="Rhea" id="RHEA:17053"/>
        <dbReference type="ChEBI" id="CHEBI:16897"/>
        <dbReference type="ChEBI" id="CHEBI:57483"/>
        <dbReference type="ChEBI" id="CHEBI:57634"/>
        <dbReference type="ChEBI" id="CHEBI:59776"/>
        <dbReference type="EC" id="2.2.1.2"/>
    </reaction>
</comment>
<comment type="pathway">
    <text evidence="1">Carbohydrate degradation; pentose phosphate pathway; D-glyceraldehyde 3-phosphate and beta-D-fructose 6-phosphate from D-ribose 5-phosphate and D-xylulose 5-phosphate (non-oxidative stage): step 2/3.</text>
</comment>
<comment type="subcellular location">
    <subcellularLocation>
        <location evidence="1">Cytoplasm</location>
    </subcellularLocation>
</comment>
<comment type="similarity">
    <text evidence="1">Belongs to the transaldolase family. Type 3B subfamily.</text>
</comment>
<reference key="1">
    <citation type="journal article" date="2003" name="Proc. Natl. Acad. Sci. U.S.A.">
        <title>Complete genome sequence of Lactobacillus plantarum WCFS1.</title>
        <authorList>
            <person name="Kleerebezem M."/>
            <person name="Boekhorst J."/>
            <person name="van Kranenburg R."/>
            <person name="Molenaar D."/>
            <person name="Kuipers O.P."/>
            <person name="Leer R."/>
            <person name="Tarchini R."/>
            <person name="Peters S.A."/>
            <person name="Sandbrink H.M."/>
            <person name="Fiers M.W.E.J."/>
            <person name="Stiekema W."/>
            <person name="Klein Lankhorst R.M."/>
            <person name="Bron P.A."/>
            <person name="Hoffer S.M."/>
            <person name="Nierop Groot M.N."/>
            <person name="Kerkhoven R."/>
            <person name="De Vries M."/>
            <person name="Ursing B."/>
            <person name="De Vos W.M."/>
            <person name="Siezen R.J."/>
        </authorList>
    </citation>
    <scope>NUCLEOTIDE SEQUENCE [LARGE SCALE GENOMIC DNA]</scope>
    <source>
        <strain>ATCC BAA-793 / NCIMB 8826 / WCFS1</strain>
    </source>
</reference>
<reference key="2">
    <citation type="journal article" date="2012" name="J. Bacteriol.">
        <title>Complete resequencing and reannotation of the Lactobacillus plantarum WCFS1 genome.</title>
        <authorList>
            <person name="Siezen R.J."/>
            <person name="Francke C."/>
            <person name="Renckens B."/>
            <person name="Boekhorst J."/>
            <person name="Wels M."/>
            <person name="Kleerebezem M."/>
            <person name="van Hijum S.A."/>
        </authorList>
    </citation>
    <scope>NUCLEOTIDE SEQUENCE [LARGE SCALE GENOMIC DNA]</scope>
    <scope>GENOME REANNOTATION</scope>
    <source>
        <strain>ATCC BAA-793 / NCIMB 8826 / WCFS1</strain>
    </source>
</reference>
<keyword id="KW-0963">Cytoplasm</keyword>
<keyword id="KW-0570">Pentose shunt</keyword>
<keyword id="KW-1185">Reference proteome</keyword>
<keyword id="KW-0704">Schiff base</keyword>
<keyword id="KW-0808">Transferase</keyword>
<organism>
    <name type="scientific">Lactiplantibacillus plantarum (strain ATCC BAA-793 / NCIMB 8826 / WCFS1)</name>
    <name type="common">Lactobacillus plantarum</name>
    <dbReference type="NCBI Taxonomy" id="220668"/>
    <lineage>
        <taxon>Bacteria</taxon>
        <taxon>Bacillati</taxon>
        <taxon>Bacillota</taxon>
        <taxon>Bacilli</taxon>
        <taxon>Lactobacillales</taxon>
        <taxon>Lactobacillaceae</taxon>
        <taxon>Lactiplantibacillus</taxon>
    </lineage>
</organism>
<dbReference type="EC" id="2.2.1.2" evidence="1"/>
<dbReference type="EMBL" id="AL935263">
    <property type="protein sequence ID" value="CCC80503.1"/>
    <property type="molecule type" value="Genomic_DNA"/>
</dbReference>
<dbReference type="RefSeq" id="YP_004891017.1">
    <property type="nucleotide sequence ID" value="NC_004567.2"/>
</dbReference>
<dbReference type="SMR" id="Q88S98"/>
<dbReference type="STRING" id="220668.lp_3539"/>
<dbReference type="EnsemblBacteria" id="CCC80503">
    <property type="protein sequence ID" value="CCC80503"/>
    <property type="gene ID" value="lp_3539"/>
</dbReference>
<dbReference type="KEGG" id="lpl:lp_3539"/>
<dbReference type="PATRIC" id="fig|220668.9.peg.2950"/>
<dbReference type="eggNOG" id="COG0176">
    <property type="taxonomic scope" value="Bacteria"/>
</dbReference>
<dbReference type="HOGENOM" id="CLU_079764_0_0_9"/>
<dbReference type="OrthoDB" id="9807051at2"/>
<dbReference type="PhylomeDB" id="Q88S98"/>
<dbReference type="UniPathway" id="UPA00115">
    <property type="reaction ID" value="UER00414"/>
</dbReference>
<dbReference type="Proteomes" id="UP000000432">
    <property type="component" value="Chromosome"/>
</dbReference>
<dbReference type="GO" id="GO:0005737">
    <property type="term" value="C:cytoplasm"/>
    <property type="evidence" value="ECO:0007669"/>
    <property type="project" value="UniProtKB-SubCell"/>
</dbReference>
<dbReference type="GO" id="GO:0016832">
    <property type="term" value="F:aldehyde-lyase activity"/>
    <property type="evidence" value="ECO:0007669"/>
    <property type="project" value="InterPro"/>
</dbReference>
<dbReference type="GO" id="GO:0004801">
    <property type="term" value="F:transaldolase activity"/>
    <property type="evidence" value="ECO:0007669"/>
    <property type="project" value="UniProtKB-UniRule"/>
</dbReference>
<dbReference type="GO" id="GO:0005975">
    <property type="term" value="P:carbohydrate metabolic process"/>
    <property type="evidence" value="ECO:0007669"/>
    <property type="project" value="InterPro"/>
</dbReference>
<dbReference type="GO" id="GO:0006098">
    <property type="term" value="P:pentose-phosphate shunt"/>
    <property type="evidence" value="ECO:0007669"/>
    <property type="project" value="UniProtKB-UniRule"/>
</dbReference>
<dbReference type="CDD" id="cd00956">
    <property type="entry name" value="Transaldolase_FSA"/>
    <property type="match status" value="1"/>
</dbReference>
<dbReference type="FunFam" id="3.20.20.70:FF:000018">
    <property type="entry name" value="Probable transaldolase"/>
    <property type="match status" value="1"/>
</dbReference>
<dbReference type="Gene3D" id="3.20.20.70">
    <property type="entry name" value="Aldolase class I"/>
    <property type="match status" value="1"/>
</dbReference>
<dbReference type="HAMAP" id="MF_00494">
    <property type="entry name" value="Transaldolase_3b"/>
    <property type="match status" value="1"/>
</dbReference>
<dbReference type="InterPro" id="IPR013785">
    <property type="entry name" value="Aldolase_TIM"/>
</dbReference>
<dbReference type="InterPro" id="IPR001585">
    <property type="entry name" value="TAL/FSA"/>
</dbReference>
<dbReference type="InterPro" id="IPR022999">
    <property type="entry name" value="Transaldolase_3B"/>
</dbReference>
<dbReference type="InterPro" id="IPR004731">
    <property type="entry name" value="Transaldolase_3B/F6P_aldolase"/>
</dbReference>
<dbReference type="InterPro" id="IPR018225">
    <property type="entry name" value="Transaldolase_AS"/>
</dbReference>
<dbReference type="InterPro" id="IPR033919">
    <property type="entry name" value="TSA/FSA_arc/bac"/>
</dbReference>
<dbReference type="NCBIfam" id="TIGR00875">
    <property type="entry name" value="fsa_talC_mipB"/>
    <property type="match status" value="1"/>
</dbReference>
<dbReference type="PANTHER" id="PTHR10683">
    <property type="entry name" value="TRANSALDOLASE"/>
    <property type="match status" value="1"/>
</dbReference>
<dbReference type="PANTHER" id="PTHR10683:SF36">
    <property type="entry name" value="TRANSALDOLASE"/>
    <property type="match status" value="1"/>
</dbReference>
<dbReference type="Pfam" id="PF00923">
    <property type="entry name" value="TAL_FSA"/>
    <property type="match status" value="1"/>
</dbReference>
<dbReference type="SUPFAM" id="SSF51569">
    <property type="entry name" value="Aldolase"/>
    <property type="match status" value="1"/>
</dbReference>
<dbReference type="PROSITE" id="PS01054">
    <property type="entry name" value="TRANSALDOLASE_1"/>
    <property type="match status" value="1"/>
</dbReference>
<dbReference type="PROSITE" id="PS00958">
    <property type="entry name" value="TRANSALDOLASE_2"/>
    <property type="match status" value="1"/>
</dbReference>
<name>TAL_LACPL</name>
<evidence type="ECO:0000255" key="1">
    <source>
        <dbReference type="HAMAP-Rule" id="MF_00494"/>
    </source>
</evidence>
<accession>Q88S98</accession>
<accession>F9UUK1</accession>
<feature type="chain" id="PRO_0000173668" description="Probable transaldolase">
    <location>
        <begin position="1"/>
        <end position="217"/>
    </location>
</feature>
<feature type="active site" description="Schiff-base intermediate with substrate" evidence="1">
    <location>
        <position position="83"/>
    </location>
</feature>
<sequence>MKFFLDTANTEDIKHFAELGLVDGVTTNPTLVSREGRDFETVIKEITQIVSGPVSAEVTATKAEEMIAQARNEIKWASNIVVKIPMTEEGLKAVKVLSGEGIKTNVTLVFSVSQGLLAAKAGATYISPFLGRLDDIGGNGIQLVKDLRQVLDTYGFKTEIIAASVRGPQHVQEAALAGADIATIPATVFGKLWSHPLTDKGLASFASDWKAFQATQK</sequence>
<proteinExistence type="inferred from homology"/>